<accession>Q7M370</accession>
<protein>
    <recommendedName>
        <fullName>Arylacetamide deacetylase</fullName>
        <ecNumber>3.1.1.3</ecNumber>
    </recommendedName>
    <alternativeName>
        <fullName>50 kDa microsomal esterase/N-deacetylase</fullName>
    </alternativeName>
</protein>
<name>AAAD_RABIT</name>
<organism>
    <name type="scientific">Oryctolagus cuniculus</name>
    <name type="common">Rabbit</name>
    <dbReference type="NCBI Taxonomy" id="9986"/>
    <lineage>
        <taxon>Eukaryota</taxon>
        <taxon>Metazoa</taxon>
        <taxon>Chordata</taxon>
        <taxon>Craniata</taxon>
        <taxon>Vertebrata</taxon>
        <taxon>Euteleostomi</taxon>
        <taxon>Mammalia</taxon>
        <taxon>Eutheria</taxon>
        <taxon>Euarchontoglires</taxon>
        <taxon>Glires</taxon>
        <taxon>Lagomorpha</taxon>
        <taxon>Leporidae</taxon>
        <taxon>Oryctolagus</taxon>
    </lineage>
</organism>
<keyword id="KW-0903">Direct protein sequencing</keyword>
<keyword id="KW-1015">Disulfide bond</keyword>
<keyword id="KW-0256">Endoplasmic reticulum</keyword>
<keyword id="KW-0325">Glycoprotein</keyword>
<keyword id="KW-0378">Hydrolase</keyword>
<keyword id="KW-0443">Lipid metabolism</keyword>
<keyword id="KW-0472">Membrane</keyword>
<keyword id="KW-0492">Microsome</keyword>
<keyword id="KW-1185">Reference proteome</keyword>
<keyword id="KW-0735">Signal-anchor</keyword>
<keyword id="KW-0812">Transmembrane</keyword>
<keyword id="KW-1133">Transmembrane helix</keyword>
<evidence type="ECO:0000250" key="1"/>
<evidence type="ECO:0000250" key="2">
    <source>
        <dbReference type="UniProtKB" id="P22760"/>
    </source>
</evidence>
<evidence type="ECO:0000250" key="3">
    <source>
        <dbReference type="UniProtKB" id="Q5NUF3"/>
    </source>
</evidence>
<evidence type="ECO:0000255" key="4"/>
<evidence type="ECO:0000255" key="5">
    <source>
        <dbReference type="PROSITE-ProRule" id="PRU10038"/>
    </source>
</evidence>
<evidence type="ECO:0000269" key="6">
    <source>
    </source>
</evidence>
<evidence type="ECO:0000269" key="7">
    <source>
    </source>
</evidence>
<evidence type="ECO:0000269" key="8">
    <source>
    </source>
</evidence>
<evidence type="ECO:0000303" key="9">
    <source>
    </source>
</evidence>
<evidence type="ECO:0000305" key="10"/>
<evidence type="ECO:0000312" key="11">
    <source>
        <dbReference type="PIR" id="A58922"/>
    </source>
</evidence>
<comment type="function">
    <text evidence="1">Displays cellular triglyceride lipase activity in liver, increases the levels of intracellular fatty acids derived from the hydrolysis of newly formed triglyceride stores and plays a role in very low-density lipoprotein assembly. Displays serine esterase activity in liver. Deacetylates a variety of arylacetamide substrates, including xenobiotic compounds and procarcinogens, converting them to the primary arylamide compounds and increasing their toxicity (By similarity).</text>
</comment>
<comment type="catalytic activity">
    <reaction evidence="8">
        <text>a triacylglycerol + H2O = a diacylglycerol + a fatty acid + H(+)</text>
        <dbReference type="Rhea" id="RHEA:12044"/>
        <dbReference type="ChEBI" id="CHEBI:15377"/>
        <dbReference type="ChEBI" id="CHEBI:15378"/>
        <dbReference type="ChEBI" id="CHEBI:17855"/>
        <dbReference type="ChEBI" id="CHEBI:18035"/>
        <dbReference type="ChEBI" id="CHEBI:28868"/>
        <dbReference type="EC" id="3.1.1.3"/>
    </reaction>
</comment>
<comment type="activity regulation">
    <text evidence="8">Inhibited by diisopropylphosphofluoridate (DFP).</text>
</comment>
<comment type="subcellular location">
    <subcellularLocation>
        <location>Endoplasmic reticulum membrane</location>
        <topology>Single-pass type II membrane protein</topology>
    </subcellularLocation>
    <subcellularLocation>
        <location>Microsome membrane</location>
        <topology>Single-pass type II membrane protein</topology>
    </subcellularLocation>
</comment>
<comment type="PTM">
    <text evidence="8">Glycosylated.</text>
</comment>
<comment type="similarity">
    <text evidence="10">Belongs to the 'GDXG' lipolytic enzyme family.</text>
</comment>
<reference evidence="10 11" key="1">
    <citation type="journal article" date="1998" name="Biochemistry">
        <title>Determination of lumenal orientation of microsomal 50-kDa esterase/N-deacetylase.</title>
        <authorList>
            <person name="Ozols J."/>
        </authorList>
    </citation>
    <scope>PROTEIN SEQUENCE</scope>
    <scope>ENZYME ACTIVITY</scope>
    <scope>SUBCELLULAR LOCATION</scope>
    <scope>MEMBRANE TOPOLOGY</scope>
    <scope>DISULFIDE BOND</scope>
    <scope>ACTIVE SITE</scope>
    <scope>GLYCOSYLATION AT ASN-77 AND ASN-281</scope>
    <source>
        <strain evidence="8">New Zealand</strain>
        <tissue evidence="8">Liver</tissue>
    </source>
</reference>
<reference evidence="10" key="2">
    <citation type="journal article" date="1999" name="J. Biol. Chem.">
        <title>Targeting proteins to the lumen of endoplasmic reticulum using N-terminal domains of 11beta-hydroxysteroid dehydrogenase and the 50-kDa esterase.</title>
        <authorList>
            <person name="Mziaut H."/>
            <person name="Korza G."/>
            <person name="Hand A.R."/>
            <person name="Gerard C."/>
            <person name="Ozols J."/>
        </authorList>
    </citation>
    <scope>TOPOLOGY</scope>
    <scope>SUBCELLULAR LOCATION</scope>
    <scope>MUTAGENESIS OF LYS-3</scope>
</reference>
<reference evidence="10" key="3">
    <citation type="journal article" date="2004" name="J. Biol. Chem.">
        <title>Appropriate function of 11beta-hydroxysteroid dehydrogenase type 1 in the endoplasmic reticulum lumen is dependent on its N-terminal region sharing similar topological determinants with 50-kDa esterase.</title>
        <authorList>
            <person name="Frick C."/>
            <person name="Atanasov A.G."/>
            <person name="Arnold P."/>
            <person name="Ozols J."/>
            <person name="Odermatt A."/>
        </authorList>
    </citation>
    <scope>SUBCELLULAR LOCATION</scope>
    <scope>MEMBRANE TOPOLOGY</scope>
    <scope>MUTAGENESIS OF LYS-3; ASP-24 AND 27-GLU-GLU-28</scope>
</reference>
<sequence>GVKTVLLLIVGVLGAYYVYTPLPDNIEEPWRLLWVNAHMKTLTNLALFAEYLGSNIFMNTVKFLTSFQEVPPTSDENVTVTETTFNNVPVRVYVPKRKSKTLRRGLFYIHGGGWCVGSAALSGYDLLSRRTADRLDVVVVSTNYRLAPEYHFPIQFEDVYDALKWFLRQDVLEKYGVDPERVGVSGDSAGGNLAAAVAQQLIKDPDVKIKLKTQSLIYPALQTLDMDLPSYRENAQFPILSKSFMVRLWSEYFTSDRSLEKAMLLNQHVPVESSHLFKFTNWSSLLPEKFKKGHVYNTPTYGSSELARKYPGFLDVRAAPLLADDAQLRGFPLTYVITCQYDVLRDDGVMYVTRLRNAGVQVTHNHIEDGFHGALSYNGFKTGYRVEKQYFEWLRENV</sequence>
<proteinExistence type="evidence at protein level"/>
<feature type="chain" id="PRO_0000071544" description="Arylacetamide deacetylase">
    <location>
        <begin position="1"/>
        <end position="398"/>
    </location>
</feature>
<feature type="topological domain" description="Cytoplasmic" evidence="4">
    <location>
        <begin position="1"/>
        <end position="4"/>
    </location>
</feature>
<feature type="transmembrane region" description="Helical; Signal-anchor for type II membrane protein" evidence="4">
    <location>
        <begin position="5"/>
        <end position="22"/>
    </location>
</feature>
<feature type="topological domain" description="Lumenal" evidence="4">
    <location>
        <begin position="23"/>
        <end position="398"/>
    </location>
</feature>
<feature type="short sequence motif" description="Involved in the stabilization of the negatively charged intermediate by the formation of the oxyanion hole" evidence="3">
    <location>
        <begin position="110"/>
        <end position="112"/>
    </location>
</feature>
<feature type="active site" evidence="5 8">
    <location>
        <position position="188"/>
    </location>
</feature>
<feature type="active site" evidence="3">
    <location>
        <position position="342"/>
    </location>
</feature>
<feature type="active site" evidence="3">
    <location>
        <position position="372"/>
    </location>
</feature>
<feature type="glycosylation site" description="N-linked (GlcNAc...) asparagine" evidence="9">
    <location>
        <position position="77"/>
    </location>
</feature>
<feature type="glycosylation site" description="N-linked (GlcNAc...) asparagine" evidence="9">
    <location>
        <position position="281"/>
    </location>
</feature>
<feature type="disulfide bond" evidence="8">
    <location>
        <begin position="115"/>
        <end position="339"/>
    </location>
</feature>
<feature type="mutagenesis site" description="No effect on membrane topology. Inverted topology; when associated with N-24; Q-27 and Q-28, or with N-24; K-27 and K-28." evidence="6 7">
    <original>K</original>
    <variation>I</variation>
    <location>
        <position position="3"/>
    </location>
</feature>
<feature type="mutagenesis site" description="Inverted topology; when associated with I-3; Q-27 and Q-28, or with I-3; K-27 and K-28." evidence="7">
    <original>D</original>
    <variation>K</variation>
    <location>
        <position position="24"/>
    </location>
</feature>
<feature type="mutagenesis site" description="No effect on topology; when associated with K-24. Inverted topology; when associated with I-3 and K-24." evidence="7">
    <original>EE</original>
    <variation>KK</variation>
    <variation>QQ</variation>
    <location>
        <begin position="27"/>
        <end position="28"/>
    </location>
</feature>
<gene>
    <name evidence="2" type="primary">AADAC</name>
</gene>
<dbReference type="EC" id="3.1.1.3"/>
<dbReference type="PIR" id="A58922">
    <property type="entry name" value="A58922"/>
</dbReference>
<dbReference type="SMR" id="Q7M370"/>
<dbReference type="FunCoup" id="Q7M370">
    <property type="interactions" value="91"/>
</dbReference>
<dbReference type="STRING" id="9986.ENSOCUP00000029194"/>
<dbReference type="ESTHER" id="rabit-Q7M370">
    <property type="family name" value="Arylacetamide_deacetylase"/>
</dbReference>
<dbReference type="GlyCosmos" id="Q7M370">
    <property type="glycosylation" value="2 sites, No reported glycans"/>
</dbReference>
<dbReference type="iPTMnet" id="Q7M370"/>
<dbReference type="PaxDb" id="9986-ENSOCUP00000020824"/>
<dbReference type="eggNOG" id="KOG1515">
    <property type="taxonomic scope" value="Eukaryota"/>
</dbReference>
<dbReference type="InParanoid" id="Q7M370"/>
<dbReference type="Proteomes" id="UP000001811">
    <property type="component" value="Unplaced"/>
</dbReference>
<dbReference type="GO" id="GO:0005789">
    <property type="term" value="C:endoplasmic reticulum membrane"/>
    <property type="evidence" value="ECO:0000314"/>
    <property type="project" value="UniProtKB"/>
</dbReference>
<dbReference type="GO" id="GO:0019213">
    <property type="term" value="F:deacetylase activity"/>
    <property type="evidence" value="ECO:0000314"/>
    <property type="project" value="UniProtKB"/>
</dbReference>
<dbReference type="GO" id="GO:0004806">
    <property type="term" value="F:triacylglycerol lipase activity"/>
    <property type="evidence" value="ECO:0007669"/>
    <property type="project" value="UniProtKB-EC"/>
</dbReference>
<dbReference type="GO" id="GO:0006629">
    <property type="term" value="P:lipid metabolic process"/>
    <property type="evidence" value="ECO:0007669"/>
    <property type="project" value="UniProtKB-KW"/>
</dbReference>
<dbReference type="Gene3D" id="3.40.50.1820">
    <property type="entry name" value="alpha/beta hydrolase"/>
    <property type="match status" value="1"/>
</dbReference>
<dbReference type="InterPro" id="IPR013094">
    <property type="entry name" value="AB_hydrolase_3"/>
</dbReference>
<dbReference type="InterPro" id="IPR029058">
    <property type="entry name" value="AB_hydrolase_fold"/>
</dbReference>
<dbReference type="InterPro" id="IPR017157">
    <property type="entry name" value="Arylacetamide_deacetylase"/>
</dbReference>
<dbReference type="InterPro" id="IPR050300">
    <property type="entry name" value="GDXG_lipolytic_enzyme"/>
</dbReference>
<dbReference type="InterPro" id="IPR033140">
    <property type="entry name" value="Lipase_GDXG_put_SER_AS"/>
</dbReference>
<dbReference type="PANTHER" id="PTHR48081">
    <property type="entry name" value="AB HYDROLASE SUPERFAMILY PROTEIN C4A8.06C"/>
    <property type="match status" value="1"/>
</dbReference>
<dbReference type="PANTHER" id="PTHR48081:SF28">
    <property type="entry name" value="ALPHA_BETA HYDROLASE FOLD-3 DOMAIN-CONTAINING PROTEIN"/>
    <property type="match status" value="1"/>
</dbReference>
<dbReference type="Pfam" id="PF07859">
    <property type="entry name" value="Abhydrolase_3"/>
    <property type="match status" value="2"/>
</dbReference>
<dbReference type="PIRSF" id="PIRSF037251">
    <property type="entry name" value="Arylacetamide_deacetylase"/>
    <property type="match status" value="1"/>
</dbReference>
<dbReference type="SUPFAM" id="SSF53474">
    <property type="entry name" value="alpha/beta-Hydrolases"/>
    <property type="match status" value="1"/>
</dbReference>
<dbReference type="PROSITE" id="PS01174">
    <property type="entry name" value="LIPASE_GDXG_SER"/>
    <property type="match status" value="1"/>
</dbReference>